<proteinExistence type="evidence at transcript level"/>
<gene>
    <name type="primary">MFSD6L</name>
    <name type="ORF">FP7072</name>
</gene>
<reference key="1">
    <citation type="journal article" date="2004" name="Proc. Natl. Acad. Sci. U.S.A.">
        <title>Large-scale cDNA transfection screening for genes related to cancer development and progression.</title>
        <authorList>
            <person name="Wan D."/>
            <person name="Gong Y."/>
            <person name="Qin W."/>
            <person name="Zhang P."/>
            <person name="Li J."/>
            <person name="Wei L."/>
            <person name="Zhou X."/>
            <person name="Li H."/>
            <person name="Qiu X."/>
            <person name="Zhong F."/>
            <person name="He L."/>
            <person name="Yu J."/>
            <person name="Yao G."/>
            <person name="Jiang H."/>
            <person name="Qian L."/>
            <person name="Yu Y."/>
            <person name="Shu H."/>
            <person name="Chen X."/>
            <person name="Xu H."/>
            <person name="Guo M."/>
            <person name="Pan Z."/>
            <person name="Chen Y."/>
            <person name="Ge C."/>
            <person name="Yang S."/>
            <person name="Gu J."/>
        </authorList>
    </citation>
    <scope>NUCLEOTIDE SEQUENCE [LARGE SCALE MRNA]</scope>
</reference>
<reference key="2">
    <citation type="journal article" date="2004" name="Nat. Genet.">
        <title>Complete sequencing and characterization of 21,243 full-length human cDNAs.</title>
        <authorList>
            <person name="Ota T."/>
            <person name="Suzuki Y."/>
            <person name="Nishikawa T."/>
            <person name="Otsuki T."/>
            <person name="Sugiyama T."/>
            <person name="Irie R."/>
            <person name="Wakamatsu A."/>
            <person name="Hayashi K."/>
            <person name="Sato H."/>
            <person name="Nagai K."/>
            <person name="Kimura K."/>
            <person name="Makita H."/>
            <person name="Sekine M."/>
            <person name="Obayashi M."/>
            <person name="Nishi T."/>
            <person name="Shibahara T."/>
            <person name="Tanaka T."/>
            <person name="Ishii S."/>
            <person name="Yamamoto J."/>
            <person name="Saito K."/>
            <person name="Kawai Y."/>
            <person name="Isono Y."/>
            <person name="Nakamura Y."/>
            <person name="Nagahari K."/>
            <person name="Murakami K."/>
            <person name="Yasuda T."/>
            <person name="Iwayanagi T."/>
            <person name="Wagatsuma M."/>
            <person name="Shiratori A."/>
            <person name="Sudo H."/>
            <person name="Hosoiri T."/>
            <person name="Kaku Y."/>
            <person name="Kodaira H."/>
            <person name="Kondo H."/>
            <person name="Sugawara M."/>
            <person name="Takahashi M."/>
            <person name="Kanda K."/>
            <person name="Yokoi T."/>
            <person name="Furuya T."/>
            <person name="Kikkawa E."/>
            <person name="Omura Y."/>
            <person name="Abe K."/>
            <person name="Kamihara K."/>
            <person name="Katsuta N."/>
            <person name="Sato K."/>
            <person name="Tanikawa M."/>
            <person name="Yamazaki M."/>
            <person name="Ninomiya K."/>
            <person name="Ishibashi T."/>
            <person name="Yamashita H."/>
            <person name="Murakawa K."/>
            <person name="Fujimori K."/>
            <person name="Tanai H."/>
            <person name="Kimata M."/>
            <person name="Watanabe M."/>
            <person name="Hiraoka S."/>
            <person name="Chiba Y."/>
            <person name="Ishida S."/>
            <person name="Ono Y."/>
            <person name="Takiguchi S."/>
            <person name="Watanabe S."/>
            <person name="Yosida M."/>
            <person name="Hotuta T."/>
            <person name="Kusano J."/>
            <person name="Kanehori K."/>
            <person name="Takahashi-Fujii A."/>
            <person name="Hara H."/>
            <person name="Tanase T.-O."/>
            <person name="Nomura Y."/>
            <person name="Togiya S."/>
            <person name="Komai F."/>
            <person name="Hara R."/>
            <person name="Takeuchi K."/>
            <person name="Arita M."/>
            <person name="Imose N."/>
            <person name="Musashino K."/>
            <person name="Yuuki H."/>
            <person name="Oshima A."/>
            <person name="Sasaki N."/>
            <person name="Aotsuka S."/>
            <person name="Yoshikawa Y."/>
            <person name="Matsunawa H."/>
            <person name="Ichihara T."/>
            <person name="Shiohata N."/>
            <person name="Sano S."/>
            <person name="Moriya S."/>
            <person name="Momiyama H."/>
            <person name="Satoh N."/>
            <person name="Takami S."/>
            <person name="Terashima Y."/>
            <person name="Suzuki O."/>
            <person name="Nakagawa S."/>
            <person name="Senoh A."/>
            <person name="Mizoguchi H."/>
            <person name="Goto Y."/>
            <person name="Shimizu F."/>
            <person name="Wakebe H."/>
            <person name="Hishigaki H."/>
            <person name="Watanabe T."/>
            <person name="Sugiyama A."/>
            <person name="Takemoto M."/>
            <person name="Kawakami B."/>
            <person name="Yamazaki M."/>
            <person name="Watanabe K."/>
            <person name="Kumagai A."/>
            <person name="Itakura S."/>
            <person name="Fukuzumi Y."/>
            <person name="Fujimori Y."/>
            <person name="Komiyama M."/>
            <person name="Tashiro H."/>
            <person name="Tanigami A."/>
            <person name="Fujiwara T."/>
            <person name="Ono T."/>
            <person name="Yamada K."/>
            <person name="Fujii Y."/>
            <person name="Ozaki K."/>
            <person name="Hirao M."/>
            <person name="Ohmori Y."/>
            <person name="Kawabata A."/>
            <person name="Hikiji T."/>
            <person name="Kobatake N."/>
            <person name="Inagaki H."/>
            <person name="Ikema Y."/>
            <person name="Okamoto S."/>
            <person name="Okitani R."/>
            <person name="Kawakami T."/>
            <person name="Noguchi S."/>
            <person name="Itoh T."/>
            <person name="Shigeta K."/>
            <person name="Senba T."/>
            <person name="Matsumura K."/>
            <person name="Nakajima Y."/>
            <person name="Mizuno T."/>
            <person name="Morinaga M."/>
            <person name="Sasaki M."/>
            <person name="Togashi T."/>
            <person name="Oyama M."/>
            <person name="Hata H."/>
            <person name="Watanabe M."/>
            <person name="Komatsu T."/>
            <person name="Mizushima-Sugano J."/>
            <person name="Satoh T."/>
            <person name="Shirai Y."/>
            <person name="Takahashi Y."/>
            <person name="Nakagawa K."/>
            <person name="Okumura K."/>
            <person name="Nagase T."/>
            <person name="Nomura N."/>
            <person name="Kikuchi H."/>
            <person name="Masuho Y."/>
            <person name="Yamashita R."/>
            <person name="Nakai K."/>
            <person name="Yada T."/>
            <person name="Nakamura Y."/>
            <person name="Ohara O."/>
            <person name="Isogai T."/>
            <person name="Sugano S."/>
        </authorList>
    </citation>
    <scope>NUCLEOTIDE SEQUENCE [LARGE SCALE MRNA]</scope>
    <source>
        <tissue>Testis</tissue>
    </source>
</reference>
<reference key="3">
    <citation type="journal article" date="2004" name="Genome Res.">
        <title>The status, quality, and expansion of the NIH full-length cDNA project: the Mammalian Gene Collection (MGC).</title>
        <authorList>
            <consortium name="The MGC Project Team"/>
        </authorList>
    </citation>
    <scope>NUCLEOTIDE SEQUENCE [LARGE SCALE MRNA]</scope>
    <source>
        <tissue>Testis</tissue>
    </source>
</reference>
<keyword id="KW-0472">Membrane</keyword>
<keyword id="KW-1185">Reference proteome</keyword>
<keyword id="KW-0812">Transmembrane</keyword>
<keyword id="KW-1133">Transmembrane helix</keyword>
<organism>
    <name type="scientific">Homo sapiens</name>
    <name type="common">Human</name>
    <dbReference type="NCBI Taxonomy" id="9606"/>
    <lineage>
        <taxon>Eukaryota</taxon>
        <taxon>Metazoa</taxon>
        <taxon>Chordata</taxon>
        <taxon>Craniata</taxon>
        <taxon>Vertebrata</taxon>
        <taxon>Euteleostomi</taxon>
        <taxon>Mammalia</taxon>
        <taxon>Eutheria</taxon>
        <taxon>Euarchontoglires</taxon>
        <taxon>Primates</taxon>
        <taxon>Haplorrhini</taxon>
        <taxon>Catarrhini</taxon>
        <taxon>Hominidae</taxon>
        <taxon>Homo</taxon>
    </lineage>
</organism>
<comment type="subcellular location">
    <subcellularLocation>
        <location evidence="3">Membrane</location>
        <topology evidence="3">Multi-pass membrane protein</topology>
    </subcellularLocation>
</comment>
<comment type="similarity">
    <text evidence="3">Belongs to the major facilitator superfamily. MFSD6 family.</text>
</comment>
<comment type="sequence caution" evidence="3">
    <conflict type="frameshift">
        <sequence resource="EMBL-CDS" id="AAM98769"/>
    </conflict>
</comment>
<name>MFS6L_HUMAN</name>
<feature type="chain" id="PRO_0000321944" description="Major facilitator superfamily domain-containing protein 6-like">
    <location>
        <begin position="1"/>
        <end position="586"/>
    </location>
</feature>
<feature type="transmembrane region" description="Helical" evidence="1">
    <location>
        <begin position="50"/>
        <end position="70"/>
    </location>
</feature>
<feature type="transmembrane region" description="Helical" evidence="1">
    <location>
        <begin position="78"/>
        <end position="98"/>
    </location>
</feature>
<feature type="transmembrane region" description="Helical" evidence="1">
    <location>
        <begin position="246"/>
        <end position="266"/>
    </location>
</feature>
<feature type="transmembrane region" description="Helical" evidence="1">
    <location>
        <begin position="287"/>
        <end position="307"/>
    </location>
</feature>
<feature type="transmembrane region" description="Helical" evidence="1">
    <location>
        <begin position="326"/>
        <end position="346"/>
    </location>
</feature>
<feature type="transmembrane region" description="Helical" evidence="1">
    <location>
        <begin position="361"/>
        <end position="381"/>
    </location>
</feature>
<feature type="transmembrane region" description="Helical" evidence="1">
    <location>
        <begin position="400"/>
        <end position="420"/>
    </location>
</feature>
<feature type="transmembrane region" description="Helical" evidence="1">
    <location>
        <begin position="433"/>
        <end position="455"/>
    </location>
</feature>
<feature type="transmembrane region" description="Helical" evidence="1">
    <location>
        <begin position="456"/>
        <end position="476"/>
    </location>
</feature>
<feature type="transmembrane region" description="Helical" evidence="1">
    <location>
        <begin position="499"/>
        <end position="519"/>
    </location>
</feature>
<feature type="transmembrane region" description="Helical" evidence="1">
    <location>
        <begin position="521"/>
        <end position="541"/>
    </location>
</feature>
<feature type="region of interest" description="Disordered" evidence="2">
    <location>
        <begin position="133"/>
        <end position="160"/>
    </location>
</feature>
<feature type="sequence variant" id="VAR_039389" description="In dbSNP:rs2242373.">
    <original>R</original>
    <variation>H</variation>
    <location>
        <position position="486"/>
    </location>
</feature>
<feature type="sequence conflict" description="In Ref. 3; AAH40487." evidence="3" ref="3">
    <original>P</original>
    <variation>T</variation>
    <location>
        <position position="214"/>
    </location>
</feature>
<feature type="sequence conflict" description="In Ref. 2; BAC04050." evidence="3" ref="2">
    <original>F</original>
    <variation>S</variation>
    <location>
        <position position="277"/>
    </location>
</feature>
<accession>Q8IWD5</accession>
<accession>Q6YL34</accession>
<accession>Q8NA76</accession>
<protein>
    <recommendedName>
        <fullName>Major facilitator superfamily domain-containing protein 6-like</fullName>
    </recommendedName>
</protein>
<sequence>MSANPRWDISRALGVAKLFHLVCGVREACVTPFLTLYLRQLGLAAPWVGTLMGTKHLIAAFWAPVCAFLAKSYRKRRALLIGSLLGSVGASLLMVLVPPVDKNRVHFPCNGSSGLTSTDALPGVTLPVNITSAQESASSHPAKRTAEVEMPGFRNPPGESDRETFRDLHVYLAPSVEGARTTSQALLHPVTSGLKDHPWEVTFEVVKTALPLLPGGKGPGNPANLSGTKGKAWAFDLSLEALRRTFILSLGSVAFWELLTAPLEQVADDSLYEFLDFVDATDRYRSLWVWRLLGMSAGVCGITALVGQLDCFLMTSGPRGVVHFYGYSVVSTLALLVSIAFPIPICQQWEPSYKRVKALSIVGGDPHLILLASTTVLVGAIVSTVQNFLFWHMKDHGSGELVMGFSVALSLLGEILLHPFKATLLRKLSRTGLVGLGLSCLAGQLLYYSFLWSWWSVLPIQILSAISNRALWWAVGASVEDLATPRMERALSALFRGHFYGSGCSLGSFVGGFVVMRFSLAVLYQACCVALLLWLALLLSIQRRLPRERKIKYSKLLSMEVSDTSDSEQGTEQDWLVKAMREEHSD</sequence>
<dbReference type="EMBL" id="AY129026">
    <property type="protein sequence ID" value="AAM98769.1"/>
    <property type="status" value="ALT_FRAME"/>
    <property type="molecule type" value="mRNA"/>
</dbReference>
<dbReference type="EMBL" id="AK093092">
    <property type="protein sequence ID" value="BAC04050.1"/>
    <property type="molecule type" value="mRNA"/>
</dbReference>
<dbReference type="EMBL" id="BC040487">
    <property type="protein sequence ID" value="AAH40487.1"/>
    <property type="molecule type" value="mRNA"/>
</dbReference>
<dbReference type="CCDS" id="CCDS11146.1"/>
<dbReference type="RefSeq" id="NP_689812.3">
    <property type="nucleotide sequence ID" value="NM_152599.3"/>
</dbReference>
<dbReference type="BioGRID" id="127814">
    <property type="interactions" value="17"/>
</dbReference>
<dbReference type="FunCoup" id="Q8IWD5">
    <property type="interactions" value="91"/>
</dbReference>
<dbReference type="STRING" id="9606.ENSP00000330051"/>
<dbReference type="TCDB" id="2.A.1.65.10">
    <property type="family name" value="the major facilitator superfamily (mfs)"/>
</dbReference>
<dbReference type="GlyGen" id="Q8IWD5">
    <property type="glycosylation" value="2 sites, 1 O-linked glycan (2 sites)"/>
</dbReference>
<dbReference type="iPTMnet" id="Q8IWD5"/>
<dbReference type="PhosphoSitePlus" id="Q8IWD5"/>
<dbReference type="BioMuta" id="MFSD6L"/>
<dbReference type="DMDM" id="190360169"/>
<dbReference type="MassIVE" id="Q8IWD5"/>
<dbReference type="PaxDb" id="9606-ENSP00000330051"/>
<dbReference type="PeptideAtlas" id="Q8IWD5"/>
<dbReference type="ProteomicsDB" id="70847"/>
<dbReference type="TopDownProteomics" id="Q8IWD5"/>
<dbReference type="Antibodypedia" id="12633">
    <property type="antibodies" value="14 antibodies from 9 providers"/>
</dbReference>
<dbReference type="DNASU" id="162387"/>
<dbReference type="Ensembl" id="ENST00000329805.6">
    <property type="protein sequence ID" value="ENSP00000330051.4"/>
    <property type="gene ID" value="ENSG00000185156.6"/>
</dbReference>
<dbReference type="GeneID" id="162387"/>
<dbReference type="KEGG" id="hsa:162387"/>
<dbReference type="MANE-Select" id="ENST00000329805.6">
    <property type="protein sequence ID" value="ENSP00000330051.4"/>
    <property type="RefSeq nucleotide sequence ID" value="NM_152599.4"/>
    <property type="RefSeq protein sequence ID" value="NP_689812.3"/>
</dbReference>
<dbReference type="UCSC" id="uc002glp.3">
    <property type="organism name" value="human"/>
</dbReference>
<dbReference type="AGR" id="HGNC:26656"/>
<dbReference type="CTD" id="162387"/>
<dbReference type="GeneCards" id="MFSD6L"/>
<dbReference type="HGNC" id="HGNC:26656">
    <property type="gene designation" value="MFSD6L"/>
</dbReference>
<dbReference type="HPA" id="ENSG00000185156">
    <property type="expression patterns" value="Tissue enhanced (pancreas, testis)"/>
</dbReference>
<dbReference type="neXtProt" id="NX_Q8IWD5"/>
<dbReference type="PharmGKB" id="PA164722299"/>
<dbReference type="VEuPathDB" id="HostDB:ENSG00000185156"/>
<dbReference type="eggNOG" id="KOG3762">
    <property type="taxonomic scope" value="Eukaryota"/>
</dbReference>
<dbReference type="GeneTree" id="ENSGT00530000063599"/>
<dbReference type="HOGENOM" id="CLU_013133_4_0_1"/>
<dbReference type="InParanoid" id="Q8IWD5"/>
<dbReference type="OMA" id="EGLQWTF"/>
<dbReference type="OrthoDB" id="515887at2759"/>
<dbReference type="PAN-GO" id="Q8IWD5">
    <property type="GO annotations" value="1 GO annotation based on evolutionary models"/>
</dbReference>
<dbReference type="PhylomeDB" id="Q8IWD5"/>
<dbReference type="TreeFam" id="TF314366"/>
<dbReference type="PathwayCommons" id="Q8IWD5"/>
<dbReference type="BioGRID-ORCS" id="162387">
    <property type="hits" value="8 hits in 1140 CRISPR screens"/>
</dbReference>
<dbReference type="ChiTaRS" id="MFSD6L">
    <property type="organism name" value="human"/>
</dbReference>
<dbReference type="GenomeRNAi" id="162387"/>
<dbReference type="Pharos" id="Q8IWD5">
    <property type="development level" value="Tdark"/>
</dbReference>
<dbReference type="PRO" id="PR:Q8IWD5"/>
<dbReference type="Proteomes" id="UP000005640">
    <property type="component" value="Chromosome 17"/>
</dbReference>
<dbReference type="RNAct" id="Q8IWD5">
    <property type="molecule type" value="protein"/>
</dbReference>
<dbReference type="Bgee" id="ENSG00000185156">
    <property type="expression patterns" value="Expressed in left testis and 62 other cell types or tissues"/>
</dbReference>
<dbReference type="GO" id="GO:0016020">
    <property type="term" value="C:membrane"/>
    <property type="evidence" value="ECO:0000318"/>
    <property type="project" value="GO_Central"/>
</dbReference>
<dbReference type="CDD" id="cd17479">
    <property type="entry name" value="MFS_MFSD6L"/>
    <property type="match status" value="1"/>
</dbReference>
<dbReference type="Gene3D" id="1.20.1250.20">
    <property type="entry name" value="MFS general substrate transporter like domains"/>
    <property type="match status" value="2"/>
</dbReference>
<dbReference type="InterPro" id="IPR024989">
    <property type="entry name" value="MFS_assoc_dom"/>
</dbReference>
<dbReference type="InterPro" id="IPR051717">
    <property type="entry name" value="MFS_MFSD6"/>
</dbReference>
<dbReference type="InterPro" id="IPR036259">
    <property type="entry name" value="MFS_trans_sf"/>
</dbReference>
<dbReference type="PANTHER" id="PTHR16172">
    <property type="entry name" value="MAJOR FACILITATOR SUPERFAMILY DOMAIN-CONTAINING PROTEIN 6-LIKE"/>
    <property type="match status" value="1"/>
</dbReference>
<dbReference type="PANTHER" id="PTHR16172:SF41">
    <property type="entry name" value="MAJOR FACILITATOR SUPERFAMILY DOMAIN-CONTAINING PROTEIN 6-LIKE"/>
    <property type="match status" value="1"/>
</dbReference>
<dbReference type="Pfam" id="PF12832">
    <property type="entry name" value="MFS_1_like"/>
    <property type="match status" value="1"/>
</dbReference>
<dbReference type="SUPFAM" id="SSF103473">
    <property type="entry name" value="MFS general substrate transporter"/>
    <property type="match status" value="2"/>
</dbReference>
<evidence type="ECO:0000255" key="1"/>
<evidence type="ECO:0000256" key="2">
    <source>
        <dbReference type="SAM" id="MobiDB-lite"/>
    </source>
</evidence>
<evidence type="ECO:0000305" key="3"/>